<gene>
    <name evidence="1" type="primary">psd</name>
    <name type="ordered locus">YPTS_0442</name>
</gene>
<evidence type="ECO:0000255" key="1">
    <source>
        <dbReference type="HAMAP-Rule" id="MF_00662"/>
    </source>
</evidence>
<organism>
    <name type="scientific">Yersinia pseudotuberculosis serotype IB (strain PB1/+)</name>
    <dbReference type="NCBI Taxonomy" id="502801"/>
    <lineage>
        <taxon>Bacteria</taxon>
        <taxon>Pseudomonadati</taxon>
        <taxon>Pseudomonadota</taxon>
        <taxon>Gammaproteobacteria</taxon>
        <taxon>Enterobacterales</taxon>
        <taxon>Yersiniaceae</taxon>
        <taxon>Yersinia</taxon>
    </lineage>
</organism>
<name>PSD_YERPB</name>
<protein>
    <recommendedName>
        <fullName evidence="1">Phosphatidylserine decarboxylase proenzyme</fullName>
        <ecNumber evidence="1">4.1.1.65</ecNumber>
    </recommendedName>
    <component>
        <recommendedName>
            <fullName evidence="1">Phosphatidylserine decarboxylase alpha chain</fullName>
        </recommendedName>
    </component>
    <component>
        <recommendedName>
            <fullName evidence="1">Phosphatidylserine decarboxylase beta chain</fullName>
        </recommendedName>
    </component>
</protein>
<sequence>MLDSIKIKLQYLLPKQGLTQLAGWGANKQGGWLTQLVIKAFARYYKVDMKEAQDPEFSAYRTFNEFFVRPLRAGVRPVVAEENLLAQPADGAISQLGAIREGQILQAKGHNYSLEALLAGNYLLAAEFQNGQFVTTYLAPRDYHRVHMPCDGVLREMIYVPGDLFSVNPLTAANVPNLFARNERVICIFDTAFGPMAQILVGATIVGSIETVWAGTITPPREGVIRRWTYPQAGCEGAITLEKGQEMGRFKLGSTVINLFAEGKVYFAPQLNSGAVTRMGEVLAEAVPTTPSY</sequence>
<feature type="chain" id="PRO_1000131422" description="Phosphatidylserine decarboxylase beta chain" evidence="1">
    <location>
        <begin position="1"/>
        <end position="253"/>
    </location>
</feature>
<feature type="chain" id="PRO_1000131423" description="Phosphatidylserine decarboxylase alpha chain" evidence="1">
    <location>
        <begin position="254"/>
        <end position="293"/>
    </location>
</feature>
<feature type="active site" description="Charge relay system; for autoendoproteolytic cleavage activity" evidence="1">
    <location>
        <position position="90"/>
    </location>
</feature>
<feature type="active site" description="Charge relay system; for autoendoproteolytic cleavage activity" evidence="1">
    <location>
        <position position="147"/>
    </location>
</feature>
<feature type="active site" description="Charge relay system; for autoendoproteolytic cleavage activity" evidence="1">
    <location>
        <position position="254"/>
    </location>
</feature>
<feature type="active site" description="Schiff-base intermediate with substrate; via pyruvic acid; for decarboxylase activity" evidence="1">
    <location>
        <position position="254"/>
    </location>
</feature>
<feature type="site" description="Cleavage (non-hydrolytic); by autocatalysis" evidence="1">
    <location>
        <begin position="253"/>
        <end position="254"/>
    </location>
</feature>
<feature type="modified residue" description="Pyruvic acid (Ser); by autocatalysis" evidence="1">
    <location>
        <position position="254"/>
    </location>
</feature>
<proteinExistence type="inferred from homology"/>
<keyword id="KW-1003">Cell membrane</keyword>
<keyword id="KW-0210">Decarboxylase</keyword>
<keyword id="KW-0444">Lipid biosynthesis</keyword>
<keyword id="KW-0443">Lipid metabolism</keyword>
<keyword id="KW-0456">Lyase</keyword>
<keyword id="KW-0472">Membrane</keyword>
<keyword id="KW-0594">Phospholipid biosynthesis</keyword>
<keyword id="KW-1208">Phospholipid metabolism</keyword>
<keyword id="KW-0670">Pyruvate</keyword>
<keyword id="KW-0865">Zymogen</keyword>
<reference key="1">
    <citation type="submission" date="2008-04" db="EMBL/GenBank/DDBJ databases">
        <title>Complete sequence of Yersinia pseudotuberculosis PB1/+.</title>
        <authorList>
            <person name="Copeland A."/>
            <person name="Lucas S."/>
            <person name="Lapidus A."/>
            <person name="Glavina del Rio T."/>
            <person name="Dalin E."/>
            <person name="Tice H."/>
            <person name="Bruce D."/>
            <person name="Goodwin L."/>
            <person name="Pitluck S."/>
            <person name="Munk A.C."/>
            <person name="Brettin T."/>
            <person name="Detter J.C."/>
            <person name="Han C."/>
            <person name="Tapia R."/>
            <person name="Schmutz J."/>
            <person name="Larimer F."/>
            <person name="Land M."/>
            <person name="Hauser L."/>
            <person name="Challacombe J.F."/>
            <person name="Green L."/>
            <person name="Lindler L.E."/>
            <person name="Nikolich M.P."/>
            <person name="Richardson P."/>
        </authorList>
    </citation>
    <scope>NUCLEOTIDE SEQUENCE [LARGE SCALE GENOMIC DNA]</scope>
    <source>
        <strain>PB1/+</strain>
    </source>
</reference>
<dbReference type="EC" id="4.1.1.65" evidence="1"/>
<dbReference type="EMBL" id="CP001048">
    <property type="protein sequence ID" value="ACC87430.1"/>
    <property type="molecule type" value="Genomic_DNA"/>
</dbReference>
<dbReference type="SMR" id="B2K1Z5"/>
<dbReference type="KEGG" id="ypb:YPTS_0442"/>
<dbReference type="PATRIC" id="fig|502801.10.peg.4118"/>
<dbReference type="UniPathway" id="UPA00558">
    <property type="reaction ID" value="UER00616"/>
</dbReference>
<dbReference type="GO" id="GO:0005886">
    <property type="term" value="C:plasma membrane"/>
    <property type="evidence" value="ECO:0007669"/>
    <property type="project" value="UniProtKB-SubCell"/>
</dbReference>
<dbReference type="GO" id="GO:0004609">
    <property type="term" value="F:phosphatidylserine decarboxylase activity"/>
    <property type="evidence" value="ECO:0007669"/>
    <property type="project" value="UniProtKB-UniRule"/>
</dbReference>
<dbReference type="GO" id="GO:0006646">
    <property type="term" value="P:phosphatidylethanolamine biosynthetic process"/>
    <property type="evidence" value="ECO:0007669"/>
    <property type="project" value="UniProtKB-UniRule"/>
</dbReference>
<dbReference type="HAMAP" id="MF_00662">
    <property type="entry name" value="PS_decarb_PSD_B_type1"/>
    <property type="match status" value="1"/>
</dbReference>
<dbReference type="InterPro" id="IPR003817">
    <property type="entry name" value="PS_Dcarbxylase"/>
</dbReference>
<dbReference type="InterPro" id="IPR033177">
    <property type="entry name" value="PSD-B"/>
</dbReference>
<dbReference type="InterPro" id="IPR033178">
    <property type="entry name" value="PSD_type1_pro"/>
</dbReference>
<dbReference type="NCBIfam" id="TIGR00163">
    <property type="entry name" value="PS_decarb"/>
    <property type="match status" value="1"/>
</dbReference>
<dbReference type="PANTHER" id="PTHR10067">
    <property type="entry name" value="PHOSPHATIDYLSERINE DECARBOXYLASE"/>
    <property type="match status" value="1"/>
</dbReference>
<dbReference type="PANTHER" id="PTHR10067:SF6">
    <property type="entry name" value="PHOSPHATIDYLSERINE DECARBOXYLASE PROENZYME, MITOCHONDRIAL"/>
    <property type="match status" value="1"/>
</dbReference>
<dbReference type="Pfam" id="PF02666">
    <property type="entry name" value="PS_Dcarbxylase"/>
    <property type="match status" value="1"/>
</dbReference>
<accession>B2K1Z5</accession>
<comment type="function">
    <text evidence="1">Catalyzes the formation of phosphatidylethanolamine (PtdEtn) from phosphatidylserine (PtdSer).</text>
</comment>
<comment type="catalytic activity">
    <reaction evidence="1">
        <text>a 1,2-diacyl-sn-glycero-3-phospho-L-serine + H(+) = a 1,2-diacyl-sn-glycero-3-phosphoethanolamine + CO2</text>
        <dbReference type="Rhea" id="RHEA:20828"/>
        <dbReference type="ChEBI" id="CHEBI:15378"/>
        <dbReference type="ChEBI" id="CHEBI:16526"/>
        <dbReference type="ChEBI" id="CHEBI:57262"/>
        <dbReference type="ChEBI" id="CHEBI:64612"/>
        <dbReference type="EC" id="4.1.1.65"/>
    </reaction>
</comment>
<comment type="cofactor">
    <cofactor evidence="1">
        <name>pyruvate</name>
        <dbReference type="ChEBI" id="CHEBI:15361"/>
    </cofactor>
    <text evidence="1">Binds 1 pyruvoyl group covalently per subunit.</text>
</comment>
<comment type="pathway">
    <text evidence="1">Phospholipid metabolism; phosphatidylethanolamine biosynthesis; phosphatidylethanolamine from CDP-diacylglycerol: step 2/2.</text>
</comment>
<comment type="subunit">
    <text evidence="1">Heterodimer of a large membrane-associated beta subunit and a small pyruvoyl-containing alpha subunit.</text>
</comment>
<comment type="subcellular location">
    <subcellularLocation>
        <location evidence="1">Cell membrane</location>
        <topology evidence="1">Peripheral membrane protein</topology>
    </subcellularLocation>
</comment>
<comment type="PTM">
    <text evidence="1">Is synthesized initially as an inactive proenzyme. Formation of the active enzyme involves a self-maturation process in which the active site pyruvoyl group is generated from an internal serine residue via an autocatalytic post-translational modification. Two non-identical subunits are generated from the proenzyme in this reaction, and the pyruvate is formed at the N-terminus of the alpha chain, which is derived from the carboxyl end of the proenzyme. The autoendoproteolytic cleavage occurs by a canonical serine protease mechanism, in which the side chain hydroxyl group of the serine supplies its oxygen atom to form the C-terminus of the beta chain, while the remainder of the serine residue undergoes an oxidative deamination to produce ammonia and the pyruvoyl prosthetic group on the alpha chain. During this reaction, the Ser that is part of the protease active site of the proenzyme becomes the pyruvoyl prosthetic group, which constitutes an essential element of the active site of the mature decarboxylase.</text>
</comment>
<comment type="similarity">
    <text evidence="1">Belongs to the phosphatidylserine decarboxylase family. PSD-B subfamily. Prokaryotic type I sub-subfamily.</text>
</comment>